<feature type="chain" id="PRO_0000100319" description="Cold shock protein CapB">
    <location>
        <begin position="1"/>
        <end position="69"/>
    </location>
</feature>
<feature type="domain" description="CSD">
    <location>
        <begin position="7"/>
        <end position="66"/>
    </location>
</feature>
<sequence>MSNRQTGTVKWFNDEKGFGFITPQSGDDLFVHFKAIQSDGFKSLKEGQQVSFIATRGQKGMQAEEVQVI</sequence>
<accession>P0A105</accession>
<accession>P72189</accession>
<accession>P80415</accession>
<name>CAPB_PSESM</name>
<proteinExistence type="inferred from homology"/>
<organism>
    <name type="scientific">Pseudomonas syringae pv. tomato (strain ATCC BAA-871 / DC3000)</name>
    <dbReference type="NCBI Taxonomy" id="223283"/>
    <lineage>
        <taxon>Bacteria</taxon>
        <taxon>Pseudomonadati</taxon>
        <taxon>Pseudomonadota</taxon>
        <taxon>Gammaproteobacteria</taxon>
        <taxon>Pseudomonadales</taxon>
        <taxon>Pseudomonadaceae</taxon>
        <taxon>Pseudomonas</taxon>
    </lineage>
</organism>
<comment type="function">
    <text evidence="1">Affects cell viability at low temperatures.</text>
</comment>
<comment type="subcellular location">
    <subcellularLocation>
        <location evidence="1">Cytoplasm</location>
    </subcellularLocation>
</comment>
<dbReference type="EMBL" id="AE016853">
    <property type="protein sequence ID" value="AAO57601.1"/>
    <property type="molecule type" value="Genomic_DNA"/>
</dbReference>
<dbReference type="RefSeq" id="NP_793906.1">
    <property type="nucleotide sequence ID" value="NC_004578.1"/>
</dbReference>
<dbReference type="RefSeq" id="WP_002554837.1">
    <property type="nucleotide sequence ID" value="NC_004578.1"/>
</dbReference>
<dbReference type="SMR" id="P0A105"/>
<dbReference type="STRING" id="223283.PSPTO_4145"/>
<dbReference type="KEGG" id="pst:PSPTO_4145"/>
<dbReference type="PATRIC" id="fig|223283.9.peg.4255"/>
<dbReference type="eggNOG" id="COG1278">
    <property type="taxonomic scope" value="Bacteria"/>
</dbReference>
<dbReference type="HOGENOM" id="CLU_117621_6_1_6"/>
<dbReference type="OrthoDB" id="9810590at2"/>
<dbReference type="PhylomeDB" id="P0A105"/>
<dbReference type="PRO" id="PR:P0A105"/>
<dbReference type="Proteomes" id="UP000002515">
    <property type="component" value="Chromosome"/>
</dbReference>
<dbReference type="GO" id="GO:0005829">
    <property type="term" value="C:cytosol"/>
    <property type="evidence" value="ECO:0007669"/>
    <property type="project" value="UniProtKB-ARBA"/>
</dbReference>
<dbReference type="GO" id="GO:0003677">
    <property type="term" value="F:DNA binding"/>
    <property type="evidence" value="ECO:0007669"/>
    <property type="project" value="UniProtKB-KW"/>
</dbReference>
<dbReference type="CDD" id="cd04458">
    <property type="entry name" value="CSP_CDS"/>
    <property type="match status" value="1"/>
</dbReference>
<dbReference type="FunFam" id="2.40.50.140:FF:000006">
    <property type="entry name" value="Cold shock protein CspC"/>
    <property type="match status" value="1"/>
</dbReference>
<dbReference type="Gene3D" id="2.40.50.140">
    <property type="entry name" value="Nucleic acid-binding proteins"/>
    <property type="match status" value="1"/>
</dbReference>
<dbReference type="InterPro" id="IPR012156">
    <property type="entry name" value="Cold_shock_CspA"/>
</dbReference>
<dbReference type="InterPro" id="IPR011129">
    <property type="entry name" value="CSD"/>
</dbReference>
<dbReference type="InterPro" id="IPR019844">
    <property type="entry name" value="CSD_CS"/>
</dbReference>
<dbReference type="InterPro" id="IPR002059">
    <property type="entry name" value="CSP_DNA-bd"/>
</dbReference>
<dbReference type="InterPro" id="IPR012340">
    <property type="entry name" value="NA-bd_OB-fold"/>
</dbReference>
<dbReference type="PANTHER" id="PTHR46565">
    <property type="entry name" value="COLD SHOCK DOMAIN PROTEIN 2"/>
    <property type="match status" value="1"/>
</dbReference>
<dbReference type="PANTHER" id="PTHR46565:SF20">
    <property type="entry name" value="COLD SHOCK DOMAIN-CONTAINING PROTEIN 4"/>
    <property type="match status" value="1"/>
</dbReference>
<dbReference type="Pfam" id="PF00313">
    <property type="entry name" value="CSD"/>
    <property type="match status" value="1"/>
</dbReference>
<dbReference type="PIRSF" id="PIRSF002599">
    <property type="entry name" value="Cold_shock_A"/>
    <property type="match status" value="1"/>
</dbReference>
<dbReference type="PRINTS" id="PR00050">
    <property type="entry name" value="COLDSHOCK"/>
</dbReference>
<dbReference type="SMART" id="SM00357">
    <property type="entry name" value="CSP"/>
    <property type="match status" value="1"/>
</dbReference>
<dbReference type="SUPFAM" id="SSF50249">
    <property type="entry name" value="Nucleic acid-binding proteins"/>
    <property type="match status" value="1"/>
</dbReference>
<dbReference type="PROSITE" id="PS00352">
    <property type="entry name" value="CSD_1"/>
    <property type="match status" value="1"/>
</dbReference>
<dbReference type="PROSITE" id="PS51857">
    <property type="entry name" value="CSD_2"/>
    <property type="match status" value="1"/>
</dbReference>
<reference key="1">
    <citation type="journal article" date="2003" name="Proc. Natl. Acad. Sci. U.S.A.">
        <title>The complete genome sequence of the Arabidopsis and tomato pathogen Pseudomonas syringae pv. tomato DC3000.</title>
        <authorList>
            <person name="Buell C.R."/>
            <person name="Joardar V."/>
            <person name="Lindeberg M."/>
            <person name="Selengut J."/>
            <person name="Paulsen I.T."/>
            <person name="Gwinn M.L."/>
            <person name="Dodson R.J."/>
            <person name="DeBoy R.T."/>
            <person name="Durkin A.S."/>
            <person name="Kolonay J.F."/>
            <person name="Madupu R."/>
            <person name="Daugherty S.C."/>
            <person name="Brinkac L.M."/>
            <person name="Beanan M.J."/>
            <person name="Haft D.H."/>
            <person name="Nelson W.C."/>
            <person name="Davidsen T.M."/>
            <person name="Zafar N."/>
            <person name="Zhou L."/>
            <person name="Liu J."/>
            <person name="Yuan Q."/>
            <person name="Khouri H.M."/>
            <person name="Fedorova N.B."/>
            <person name="Tran B."/>
            <person name="Russell D."/>
            <person name="Berry K.J."/>
            <person name="Utterback T.R."/>
            <person name="Van Aken S.E."/>
            <person name="Feldblyum T.V."/>
            <person name="D'Ascenzo M."/>
            <person name="Deng W.-L."/>
            <person name="Ramos A.R."/>
            <person name="Alfano J.R."/>
            <person name="Cartinhour S."/>
            <person name="Chatterjee A.K."/>
            <person name="Delaney T.P."/>
            <person name="Lazarowitz S.G."/>
            <person name="Martin G.B."/>
            <person name="Schneider D.J."/>
            <person name="Tang X."/>
            <person name="Bender C.L."/>
            <person name="White O."/>
            <person name="Fraser C.M."/>
            <person name="Collmer A."/>
        </authorList>
    </citation>
    <scope>NUCLEOTIDE SEQUENCE [LARGE SCALE GENOMIC DNA]</scope>
    <source>
        <strain>ATCC BAA-871 / DC3000</strain>
    </source>
</reference>
<gene>
    <name type="primary">capB</name>
    <name type="ordered locus">PSPTO_4145</name>
</gene>
<keyword id="KW-0010">Activator</keyword>
<keyword id="KW-0963">Cytoplasm</keyword>
<keyword id="KW-0238">DNA-binding</keyword>
<keyword id="KW-1185">Reference proteome</keyword>
<keyword id="KW-0804">Transcription</keyword>
<keyword id="KW-0805">Transcription regulation</keyword>
<evidence type="ECO:0000250" key="1"/>
<protein>
    <recommendedName>
        <fullName>Cold shock protein CapB</fullName>
    </recommendedName>
    <alternativeName>
        <fullName>Cold acclimation protein B</fullName>
    </alternativeName>
</protein>